<accession>B1KJK5</accession>
<name>NUSB_SHEWM</name>
<dbReference type="EMBL" id="CP000961">
    <property type="protein sequence ID" value="ACA85678.1"/>
    <property type="molecule type" value="Genomic_DNA"/>
</dbReference>
<dbReference type="RefSeq" id="WP_012324024.1">
    <property type="nucleotide sequence ID" value="NC_010506.1"/>
</dbReference>
<dbReference type="SMR" id="B1KJK5"/>
<dbReference type="STRING" id="392500.Swoo_1386"/>
<dbReference type="KEGG" id="swd:Swoo_1386"/>
<dbReference type="eggNOG" id="COG0781">
    <property type="taxonomic scope" value="Bacteria"/>
</dbReference>
<dbReference type="HOGENOM" id="CLU_087843_4_1_6"/>
<dbReference type="Proteomes" id="UP000002168">
    <property type="component" value="Chromosome"/>
</dbReference>
<dbReference type="GO" id="GO:0005829">
    <property type="term" value="C:cytosol"/>
    <property type="evidence" value="ECO:0007669"/>
    <property type="project" value="TreeGrafter"/>
</dbReference>
<dbReference type="GO" id="GO:0003723">
    <property type="term" value="F:RNA binding"/>
    <property type="evidence" value="ECO:0007669"/>
    <property type="project" value="UniProtKB-UniRule"/>
</dbReference>
<dbReference type="GO" id="GO:0006353">
    <property type="term" value="P:DNA-templated transcription termination"/>
    <property type="evidence" value="ECO:0007669"/>
    <property type="project" value="UniProtKB-UniRule"/>
</dbReference>
<dbReference type="GO" id="GO:0031564">
    <property type="term" value="P:transcription antitermination"/>
    <property type="evidence" value="ECO:0007669"/>
    <property type="project" value="UniProtKB-KW"/>
</dbReference>
<dbReference type="CDD" id="cd00619">
    <property type="entry name" value="Terminator_NusB"/>
    <property type="match status" value="1"/>
</dbReference>
<dbReference type="FunFam" id="1.10.940.10:FF:000001">
    <property type="entry name" value="Transcription antitermination factor NusB"/>
    <property type="match status" value="1"/>
</dbReference>
<dbReference type="Gene3D" id="1.10.940.10">
    <property type="entry name" value="NusB-like"/>
    <property type="match status" value="1"/>
</dbReference>
<dbReference type="HAMAP" id="MF_00073">
    <property type="entry name" value="NusB"/>
    <property type="match status" value="1"/>
</dbReference>
<dbReference type="InterPro" id="IPR035926">
    <property type="entry name" value="NusB-like_sf"/>
</dbReference>
<dbReference type="InterPro" id="IPR011605">
    <property type="entry name" value="NusB_fam"/>
</dbReference>
<dbReference type="InterPro" id="IPR006027">
    <property type="entry name" value="NusB_RsmB_TIM44"/>
</dbReference>
<dbReference type="NCBIfam" id="TIGR01951">
    <property type="entry name" value="nusB"/>
    <property type="match status" value="1"/>
</dbReference>
<dbReference type="PANTHER" id="PTHR11078:SF3">
    <property type="entry name" value="ANTITERMINATION NUSB DOMAIN-CONTAINING PROTEIN"/>
    <property type="match status" value="1"/>
</dbReference>
<dbReference type="PANTHER" id="PTHR11078">
    <property type="entry name" value="N UTILIZATION SUBSTANCE PROTEIN B-RELATED"/>
    <property type="match status" value="1"/>
</dbReference>
<dbReference type="Pfam" id="PF01029">
    <property type="entry name" value="NusB"/>
    <property type="match status" value="1"/>
</dbReference>
<dbReference type="SUPFAM" id="SSF48013">
    <property type="entry name" value="NusB-like"/>
    <property type="match status" value="1"/>
</dbReference>
<sequence length="134" mass="15257">MKPSERRKARRLAVQAIYSWQLSGNNIADVEHEFLTEQKIDGIDVTYFRELLSGTATKQAQIDELITPHIERPYDEVSPIEKAVLRLATYELTFRKDVPYKVAINEAIELAKAFGAEDGHKFVNGILDKIVGRK</sequence>
<evidence type="ECO:0000255" key="1">
    <source>
        <dbReference type="HAMAP-Rule" id="MF_00073"/>
    </source>
</evidence>
<gene>
    <name evidence="1" type="primary">nusB</name>
    <name type="ordered locus">Swoo_1386</name>
</gene>
<proteinExistence type="inferred from homology"/>
<comment type="function">
    <text evidence="1">Involved in transcription antitermination. Required for transcription of ribosomal RNA (rRNA) genes. Binds specifically to the boxA antiterminator sequence of the ribosomal RNA (rrn) operons.</text>
</comment>
<comment type="similarity">
    <text evidence="1">Belongs to the NusB family.</text>
</comment>
<organism>
    <name type="scientific">Shewanella woodyi (strain ATCC 51908 / MS32)</name>
    <dbReference type="NCBI Taxonomy" id="392500"/>
    <lineage>
        <taxon>Bacteria</taxon>
        <taxon>Pseudomonadati</taxon>
        <taxon>Pseudomonadota</taxon>
        <taxon>Gammaproteobacteria</taxon>
        <taxon>Alteromonadales</taxon>
        <taxon>Shewanellaceae</taxon>
        <taxon>Shewanella</taxon>
    </lineage>
</organism>
<keyword id="KW-1185">Reference proteome</keyword>
<keyword id="KW-0694">RNA-binding</keyword>
<keyword id="KW-0804">Transcription</keyword>
<keyword id="KW-0889">Transcription antitermination</keyword>
<keyword id="KW-0805">Transcription regulation</keyword>
<reference key="1">
    <citation type="submission" date="2008-02" db="EMBL/GenBank/DDBJ databases">
        <title>Complete sequence of Shewanella woodyi ATCC 51908.</title>
        <authorList>
            <consortium name="US DOE Joint Genome Institute"/>
            <person name="Copeland A."/>
            <person name="Lucas S."/>
            <person name="Lapidus A."/>
            <person name="Glavina del Rio T."/>
            <person name="Dalin E."/>
            <person name="Tice H."/>
            <person name="Bruce D."/>
            <person name="Goodwin L."/>
            <person name="Pitluck S."/>
            <person name="Sims D."/>
            <person name="Brettin T."/>
            <person name="Detter J.C."/>
            <person name="Han C."/>
            <person name="Kuske C.R."/>
            <person name="Schmutz J."/>
            <person name="Larimer F."/>
            <person name="Land M."/>
            <person name="Hauser L."/>
            <person name="Kyrpides N."/>
            <person name="Lykidis A."/>
            <person name="Zhao J.-S."/>
            <person name="Richardson P."/>
        </authorList>
    </citation>
    <scope>NUCLEOTIDE SEQUENCE [LARGE SCALE GENOMIC DNA]</scope>
    <source>
        <strain>ATCC 51908 / MS32</strain>
    </source>
</reference>
<feature type="chain" id="PRO_1000092587" description="Transcription antitermination protein NusB">
    <location>
        <begin position="1"/>
        <end position="134"/>
    </location>
</feature>
<protein>
    <recommendedName>
        <fullName evidence="1">Transcription antitermination protein NusB</fullName>
    </recommendedName>
    <alternativeName>
        <fullName evidence="1">Antitermination factor NusB</fullName>
    </alternativeName>
</protein>